<accession>D0NLC2</accession>
<organism>
    <name type="scientific">Phytophthora infestans (strain T30-4)</name>
    <name type="common">Potato late blight agent</name>
    <dbReference type="NCBI Taxonomy" id="403677"/>
    <lineage>
        <taxon>Eukaryota</taxon>
        <taxon>Sar</taxon>
        <taxon>Stramenopiles</taxon>
        <taxon>Oomycota</taxon>
        <taxon>Peronosporales</taxon>
        <taxon>Peronosporaceae</taxon>
        <taxon>Phytophthora</taxon>
    </lineage>
</organism>
<name>TRM5_PHYIT</name>
<sequence length="411" mass="46720">MSKPLLDKTLFKKTLDVVGVRVEAKKIGRVVKKLHGHLLNLPRLRNVVPDPTNPDPYKNSSSKLILLNSKVKDMETLQPLNEDLVAFLKEESLAFVSHAIELDYSYFAVDQVLSELLPKGMDIPSSFETVGHIAHLNLRDNQLPFKNVIGQVILDKNAQIRTVVNKTDNIETKFRTFPMEVLAGDDDMEVEVHESKASFRFNYAEVYWNSRLQQEHLRIIRQIKPHDVVCDMMCGIGPFAVPVALNGSKVYANDLNPRSYHYLKENIALNKVEKLVTAYNLDGRDFLAKLLSEKKQFTQVLMNLPAIALEFLDAFPGQFDHWEGELPFVHCYCFSNADDVKQDVKQRAEKIMGGELDPERTSFHLVRDVAPKKVMVCISFQLPESIAFSSERQASKQDDPKRRKVAAENAA</sequence>
<feature type="chain" id="PRO_0000414155" description="tRNA (guanine(37)-N(1))-methyltransferase">
    <location>
        <begin position="1"/>
        <end position="411"/>
    </location>
</feature>
<feature type="region of interest" description="Disordered" evidence="2">
    <location>
        <begin position="391"/>
        <end position="411"/>
    </location>
</feature>
<feature type="binding site" evidence="1">
    <location>
        <position position="216"/>
    </location>
    <ligand>
        <name>S-adenosyl-L-methionine</name>
        <dbReference type="ChEBI" id="CHEBI:59789"/>
    </ligand>
</feature>
<feature type="binding site" evidence="1">
    <location>
        <begin position="254"/>
        <end position="255"/>
    </location>
    <ligand>
        <name>S-adenosyl-L-methionine</name>
        <dbReference type="ChEBI" id="CHEBI:59789"/>
    </ligand>
</feature>
<feature type="binding site" evidence="1">
    <location>
        <begin position="282"/>
        <end position="283"/>
    </location>
    <ligand>
        <name>S-adenosyl-L-methionine</name>
        <dbReference type="ChEBI" id="CHEBI:59789"/>
    </ligand>
</feature>
<feature type="binding site" evidence="1">
    <location>
        <position position="303"/>
    </location>
    <ligand>
        <name>S-adenosyl-L-methionine</name>
        <dbReference type="ChEBI" id="CHEBI:59789"/>
    </ligand>
</feature>
<gene>
    <name type="ORF">PITG_12867</name>
</gene>
<evidence type="ECO:0000255" key="1">
    <source>
        <dbReference type="HAMAP-Rule" id="MF_03152"/>
    </source>
</evidence>
<evidence type="ECO:0000256" key="2">
    <source>
        <dbReference type="SAM" id="MobiDB-lite"/>
    </source>
</evidence>
<evidence type="ECO:0000305" key="3"/>
<keyword id="KW-0963">Cytoplasm</keyword>
<keyword id="KW-0489">Methyltransferase</keyword>
<keyword id="KW-0496">Mitochondrion</keyword>
<keyword id="KW-0539">Nucleus</keyword>
<keyword id="KW-1185">Reference proteome</keyword>
<keyword id="KW-0949">S-adenosyl-L-methionine</keyword>
<keyword id="KW-0808">Transferase</keyword>
<keyword id="KW-0819">tRNA processing</keyword>
<comment type="function">
    <text evidence="1">Specifically methylates the N1 position of guanosine-37 in various cytoplasmic and mitochondrial tRNAs. Methylation is not dependent on the nature of the nucleoside 5' of the target nucleoside. This is the first step in the biosynthesis of wybutosine (yW), a modified base adjacent to the anticodon of tRNAs and required for accurate decoding.</text>
</comment>
<comment type="catalytic activity">
    <reaction evidence="1">
        <text>guanosine(37) in tRNA + S-adenosyl-L-methionine = N(1)-methylguanosine(37) in tRNA + S-adenosyl-L-homocysteine + H(+)</text>
        <dbReference type="Rhea" id="RHEA:36899"/>
        <dbReference type="Rhea" id="RHEA-COMP:10145"/>
        <dbReference type="Rhea" id="RHEA-COMP:10147"/>
        <dbReference type="ChEBI" id="CHEBI:15378"/>
        <dbReference type="ChEBI" id="CHEBI:57856"/>
        <dbReference type="ChEBI" id="CHEBI:59789"/>
        <dbReference type="ChEBI" id="CHEBI:73542"/>
        <dbReference type="ChEBI" id="CHEBI:74269"/>
        <dbReference type="EC" id="2.1.1.228"/>
    </reaction>
</comment>
<comment type="subunit">
    <text evidence="1">Monomer.</text>
</comment>
<comment type="subcellular location">
    <subcellularLocation>
        <location evidence="1">Mitochondrion matrix</location>
    </subcellularLocation>
    <subcellularLocation>
        <location evidence="1">Nucleus</location>
    </subcellularLocation>
    <subcellularLocation>
        <location evidence="1">Cytoplasm</location>
    </subcellularLocation>
    <text evidence="1">Predominantly in the mitochondria and in the nucleus.</text>
</comment>
<comment type="similarity">
    <text evidence="3">Belongs to the class I-like SAM-binding methyltransferase superfamily. TRM5/TYW2 family.</text>
</comment>
<protein>
    <recommendedName>
        <fullName evidence="1">tRNA (guanine(37)-N(1))-methyltransferase</fullName>
        <ecNumber evidence="1">2.1.1.228</ecNumber>
    </recommendedName>
    <alternativeName>
        <fullName evidence="1">M1G-methyltransferase</fullName>
    </alternativeName>
    <alternativeName>
        <fullName evidence="1">tRNA [GM37] methyltransferase</fullName>
    </alternativeName>
    <alternativeName>
        <fullName evidence="1">tRNA methyltransferase 5 homolog</fullName>
    </alternativeName>
</protein>
<reference key="1">
    <citation type="journal article" date="2009" name="Nature">
        <title>Genome sequence and analysis of the Irish potato famine pathogen Phytophthora infestans.</title>
        <authorList>
            <consortium name="The Broad Institute Genome Sequencing Platform"/>
            <person name="Haas B.J."/>
            <person name="Kamoun S."/>
            <person name="Zody M.C."/>
            <person name="Jiang R.H."/>
            <person name="Handsaker R.E."/>
            <person name="Cano L.M."/>
            <person name="Grabherr M."/>
            <person name="Kodira C.D."/>
            <person name="Raffaele S."/>
            <person name="Torto-Alalibo T."/>
            <person name="Bozkurt T.O."/>
            <person name="Ah-Fong A.M."/>
            <person name="Alvarado L."/>
            <person name="Anderson V.L."/>
            <person name="Armstrong M.R."/>
            <person name="Avrova A."/>
            <person name="Baxter L."/>
            <person name="Beynon J."/>
            <person name="Boevink P.C."/>
            <person name="Bollmann S.R."/>
            <person name="Bos J.I."/>
            <person name="Bulone V."/>
            <person name="Cai G."/>
            <person name="Cakir C."/>
            <person name="Carrington J.C."/>
            <person name="Chawner M."/>
            <person name="Conti L."/>
            <person name="Costanzo S."/>
            <person name="Ewan R."/>
            <person name="Fahlgren N."/>
            <person name="Fischbach M.A."/>
            <person name="Fugelstad J."/>
            <person name="Gilroy E.M."/>
            <person name="Gnerre S."/>
            <person name="Green P.J."/>
            <person name="Grenville-Briggs L.J."/>
            <person name="Griffith J."/>
            <person name="Grunwald N.J."/>
            <person name="Horn K."/>
            <person name="Horner N.R."/>
            <person name="Hu C.H."/>
            <person name="Huitema E."/>
            <person name="Jeong D.H."/>
            <person name="Jones A.M."/>
            <person name="Jones J.D."/>
            <person name="Jones R.W."/>
            <person name="Karlsson E.K."/>
            <person name="Kunjeti S.G."/>
            <person name="Lamour K."/>
            <person name="Liu Z."/>
            <person name="Ma L."/>
            <person name="Maclean D."/>
            <person name="Chibucos M.C."/>
            <person name="McDonald H."/>
            <person name="McWalters J."/>
            <person name="Meijer H.J."/>
            <person name="Morgan W."/>
            <person name="Morris P.F."/>
            <person name="Munro C.A."/>
            <person name="O'Neill K."/>
            <person name="Ospina-Giraldo M."/>
            <person name="Pinzon A."/>
            <person name="Pritchard L."/>
            <person name="Ramsahoye B."/>
            <person name="Ren Q."/>
            <person name="Restrepo S."/>
            <person name="Roy S."/>
            <person name="Sadanandom A."/>
            <person name="Savidor A."/>
            <person name="Schornack S."/>
            <person name="Schwartz D.C."/>
            <person name="Schumann U.D."/>
            <person name="Schwessinger B."/>
            <person name="Seyer L."/>
            <person name="Sharpe T."/>
            <person name="Silvar C."/>
            <person name="Song J."/>
            <person name="Studholme D.J."/>
            <person name="Sykes S."/>
            <person name="Thines M."/>
            <person name="van de Vondervoort P.J."/>
            <person name="Phuntumart V."/>
            <person name="Wawra S."/>
            <person name="Weide R."/>
            <person name="Win J."/>
            <person name="Young C."/>
            <person name="Zhou S."/>
            <person name="Fry W."/>
            <person name="Meyers B.C."/>
            <person name="van West P."/>
            <person name="Ristaino J."/>
            <person name="Govers F."/>
            <person name="Birch P.R."/>
            <person name="Whisson S.C."/>
            <person name="Judelson H.S."/>
            <person name="Nusbaum C."/>
        </authorList>
    </citation>
    <scope>NUCLEOTIDE SEQUENCE [LARGE SCALE GENOMIC DNA]</scope>
    <source>
        <strain>T30-4</strain>
    </source>
</reference>
<proteinExistence type="inferred from homology"/>
<dbReference type="EC" id="2.1.1.228" evidence="1"/>
<dbReference type="EMBL" id="DS028144">
    <property type="protein sequence ID" value="EEY60440.1"/>
    <property type="molecule type" value="Genomic_DNA"/>
</dbReference>
<dbReference type="RefSeq" id="XP_002900236.1">
    <property type="nucleotide sequence ID" value="XM_002900190.1"/>
</dbReference>
<dbReference type="SMR" id="D0NLC2"/>
<dbReference type="STRING" id="403677.D0NLC2"/>
<dbReference type="EnsemblProtists" id="PITG_12867T0">
    <property type="protein sequence ID" value="PITG_12867T0"/>
    <property type="gene ID" value="PITG_12867"/>
</dbReference>
<dbReference type="GeneID" id="9478177"/>
<dbReference type="KEGG" id="pif:PITG_12867"/>
<dbReference type="VEuPathDB" id="FungiDB:PITG_12867"/>
<dbReference type="eggNOG" id="KOG2078">
    <property type="taxonomic scope" value="Eukaryota"/>
</dbReference>
<dbReference type="HOGENOM" id="CLU_022610_2_3_1"/>
<dbReference type="InParanoid" id="D0NLC2"/>
<dbReference type="OMA" id="VGSHSQF"/>
<dbReference type="OrthoDB" id="408788at2759"/>
<dbReference type="Proteomes" id="UP000006643">
    <property type="component" value="Partially assembled WGS sequence"/>
</dbReference>
<dbReference type="GO" id="GO:0005759">
    <property type="term" value="C:mitochondrial matrix"/>
    <property type="evidence" value="ECO:0007669"/>
    <property type="project" value="UniProtKB-SubCell"/>
</dbReference>
<dbReference type="GO" id="GO:0005634">
    <property type="term" value="C:nucleus"/>
    <property type="evidence" value="ECO:0007669"/>
    <property type="project" value="UniProtKB-SubCell"/>
</dbReference>
<dbReference type="GO" id="GO:0052906">
    <property type="term" value="F:tRNA (guanine(37)-N1)-methyltransferase activity"/>
    <property type="evidence" value="ECO:0007669"/>
    <property type="project" value="UniProtKB-UniRule"/>
</dbReference>
<dbReference type="GO" id="GO:0002939">
    <property type="term" value="P:tRNA N1-guanine methylation"/>
    <property type="evidence" value="ECO:0007669"/>
    <property type="project" value="TreeGrafter"/>
</dbReference>
<dbReference type="CDD" id="cd02440">
    <property type="entry name" value="AdoMet_MTases"/>
    <property type="match status" value="1"/>
</dbReference>
<dbReference type="FunFam" id="3.30.300.110:FF:000001">
    <property type="entry name" value="tRNA (guanine(37)-N1)-methyltransferase"/>
    <property type="match status" value="1"/>
</dbReference>
<dbReference type="FunFam" id="3.40.50.150:FF:000795">
    <property type="entry name" value="tRNA (guanine(37)-N1)-methyltransferase"/>
    <property type="match status" value="1"/>
</dbReference>
<dbReference type="Gene3D" id="3.30.300.110">
    <property type="entry name" value="Met-10+ protein-like domains"/>
    <property type="match status" value="1"/>
</dbReference>
<dbReference type="Gene3D" id="3.40.50.150">
    <property type="entry name" value="Vaccinia Virus protein VP39"/>
    <property type="match status" value="1"/>
</dbReference>
<dbReference type="HAMAP" id="MF_03152">
    <property type="entry name" value="TRM5"/>
    <property type="match status" value="1"/>
</dbReference>
<dbReference type="InterPro" id="IPR030382">
    <property type="entry name" value="MeTrfase_TRM5/TYW2"/>
</dbReference>
<dbReference type="InterPro" id="IPR029063">
    <property type="entry name" value="SAM-dependent_MTases_sf"/>
</dbReference>
<dbReference type="InterPro" id="IPR056743">
    <property type="entry name" value="TRM5-TYW2-like_MTfase"/>
</dbReference>
<dbReference type="InterPro" id="IPR056744">
    <property type="entry name" value="TRM5/TYW2-like_N"/>
</dbReference>
<dbReference type="InterPro" id="IPR025792">
    <property type="entry name" value="tRNA_Gua_MeTrfase_euk"/>
</dbReference>
<dbReference type="PANTHER" id="PTHR23245:SF36">
    <property type="entry name" value="TRNA (GUANINE(37)-N1)-METHYLTRANSFERASE"/>
    <property type="match status" value="1"/>
</dbReference>
<dbReference type="PANTHER" id="PTHR23245">
    <property type="entry name" value="TRNA METHYLTRANSFERASE"/>
    <property type="match status" value="1"/>
</dbReference>
<dbReference type="Pfam" id="PF02475">
    <property type="entry name" value="TRM5-TYW2_MTfase"/>
    <property type="match status" value="1"/>
</dbReference>
<dbReference type="Pfam" id="PF25133">
    <property type="entry name" value="TYW2_N_2"/>
    <property type="match status" value="1"/>
</dbReference>
<dbReference type="SUPFAM" id="SSF53335">
    <property type="entry name" value="S-adenosyl-L-methionine-dependent methyltransferases"/>
    <property type="match status" value="1"/>
</dbReference>
<dbReference type="PROSITE" id="PS51684">
    <property type="entry name" value="SAM_MT_TRM5_TYW2"/>
    <property type="match status" value="1"/>
</dbReference>